<feature type="chain" id="PRO_0000221127" description="Alpha-(1,3)-fucosyltransferase B">
    <location>
        <begin position="1"/>
        <end position="444"/>
    </location>
</feature>
<feature type="topological domain" description="Cytoplasmic" evidence="2">
    <location>
        <begin position="1"/>
        <end position="6"/>
    </location>
</feature>
<feature type="transmembrane region" description="Helical; Signal-anchor for type II membrane protein" evidence="2">
    <location>
        <begin position="7"/>
        <end position="27"/>
    </location>
</feature>
<feature type="topological domain" description="Lumenal" evidence="2">
    <location>
        <begin position="28"/>
        <end position="444"/>
    </location>
</feature>
<feature type="glycosylation site" description="N-linked (GlcNAc...) asparagine" evidence="2">
    <location>
        <position position="279"/>
    </location>
</feature>
<feature type="glycosylation site" description="N-linked (GlcNAc...) asparagine" evidence="2">
    <location>
        <position position="437"/>
    </location>
</feature>
<feature type="glycosylation site" description="N-linked (GlcNAc...) asparagine" evidence="2">
    <location>
        <position position="440"/>
    </location>
</feature>
<feature type="sequence conflict" description="In Ref. 1; CAC41642." evidence="3" ref="1">
    <original>V</original>
    <variation>I</variation>
    <location>
        <position position="409"/>
    </location>
</feature>
<feature type="sequence conflict" description="In Ref. 1; CAC41642." evidence="3" ref="1">
    <original>D</original>
    <variation>N</variation>
    <location>
        <position position="417"/>
    </location>
</feature>
<sequence length="444" mass="51801">MRLAQRYGIALVALLMVGATVLFFWSENIINYENIKFNSPVELVWWSRDMSWNYDVQRQCGIHTCRITNKRSRRPWARGVLFYGSNIKTGDFPLPRNEHQIWALLHEESPRNTPFVSNKEFLRHFHFTSTFSRYSNLPLTTMYLPSGEALTSKDYYVTFDGKSKYGYRPSTSVVFLQSDCDTMSGREDYVKELMKHLPIDSYGSCLRNRDLPESLQKDYLNNLYSPELLRFLSEYKFMIAIENAACPDYITEKFWRPLIMGVIPIYFGSPTIKDWEPNNKSAIFVNDFQNPQALVEYLNKLADNKKLYNSYRQHKLNRRNPISNKKLLHNLVTRQYHIGDSSPGASLFEKFECAVCYHVINTARNVKADLRHYNCPLEPVYAKMEGQKIPQNVADWRAAMEVGQCQAKVLDEFFRRDIGFNDAEFDAELNRRIEGNNCSNSSNT</sequence>
<reference key="1">
    <citation type="journal article" date="2001" name="J. Biol. Chem.">
        <title>Identification of core alpha1,3-fucosylated glycans and cloning of the requisite fucosyltransferase cDNA from Drosophila melanogaster: Potential basis of the neural anti-horseradish peroxidase epitope.</title>
        <authorList>
            <person name="Fabini G."/>
            <person name="Freilinger A."/>
            <person name="Altmann F."/>
            <person name="Wilson I.B.H."/>
        </authorList>
    </citation>
    <scope>NUCLEOTIDE SEQUENCE [MRNA]</scope>
    <source>
        <strain>Canton-S</strain>
    </source>
</reference>
<reference key="2">
    <citation type="submission" date="2001-11" db="EMBL/GenBank/DDBJ databases">
        <title>Core a3- and a6-fucosyltransferases in Drosophila: characterization and origin of diversity.</title>
        <authorList>
            <person name="Petit D."/>
            <person name="Picaud F."/>
            <person name="Dupuy F."/>
            <person name="Germot A."/>
            <person name="Julien R."/>
            <person name="Maftah A."/>
        </authorList>
    </citation>
    <scope>NUCLEOTIDE SEQUENCE [MRNA]</scope>
</reference>
<reference key="3">
    <citation type="journal article" date="2000" name="Science">
        <title>The genome sequence of Drosophila melanogaster.</title>
        <authorList>
            <person name="Adams M.D."/>
            <person name="Celniker S.E."/>
            <person name="Holt R.A."/>
            <person name="Evans C.A."/>
            <person name="Gocayne J.D."/>
            <person name="Amanatides P.G."/>
            <person name="Scherer S.E."/>
            <person name="Li P.W."/>
            <person name="Hoskins R.A."/>
            <person name="Galle R.F."/>
            <person name="George R.A."/>
            <person name="Lewis S.E."/>
            <person name="Richards S."/>
            <person name="Ashburner M."/>
            <person name="Henderson S.N."/>
            <person name="Sutton G.G."/>
            <person name="Wortman J.R."/>
            <person name="Yandell M.D."/>
            <person name="Zhang Q."/>
            <person name="Chen L.X."/>
            <person name="Brandon R.C."/>
            <person name="Rogers Y.-H.C."/>
            <person name="Blazej R.G."/>
            <person name="Champe M."/>
            <person name="Pfeiffer B.D."/>
            <person name="Wan K.H."/>
            <person name="Doyle C."/>
            <person name="Baxter E.G."/>
            <person name="Helt G."/>
            <person name="Nelson C.R."/>
            <person name="Miklos G.L.G."/>
            <person name="Abril J.F."/>
            <person name="Agbayani A."/>
            <person name="An H.-J."/>
            <person name="Andrews-Pfannkoch C."/>
            <person name="Baldwin D."/>
            <person name="Ballew R.M."/>
            <person name="Basu A."/>
            <person name="Baxendale J."/>
            <person name="Bayraktaroglu L."/>
            <person name="Beasley E.M."/>
            <person name="Beeson K.Y."/>
            <person name="Benos P.V."/>
            <person name="Berman B.P."/>
            <person name="Bhandari D."/>
            <person name="Bolshakov S."/>
            <person name="Borkova D."/>
            <person name="Botchan M.R."/>
            <person name="Bouck J."/>
            <person name="Brokstein P."/>
            <person name="Brottier P."/>
            <person name="Burtis K.C."/>
            <person name="Busam D.A."/>
            <person name="Butler H."/>
            <person name="Cadieu E."/>
            <person name="Center A."/>
            <person name="Chandra I."/>
            <person name="Cherry J.M."/>
            <person name="Cawley S."/>
            <person name="Dahlke C."/>
            <person name="Davenport L.B."/>
            <person name="Davies P."/>
            <person name="de Pablos B."/>
            <person name="Delcher A."/>
            <person name="Deng Z."/>
            <person name="Mays A.D."/>
            <person name="Dew I."/>
            <person name="Dietz S.M."/>
            <person name="Dodson K."/>
            <person name="Doup L.E."/>
            <person name="Downes M."/>
            <person name="Dugan-Rocha S."/>
            <person name="Dunkov B.C."/>
            <person name="Dunn P."/>
            <person name="Durbin K.J."/>
            <person name="Evangelista C.C."/>
            <person name="Ferraz C."/>
            <person name="Ferriera S."/>
            <person name="Fleischmann W."/>
            <person name="Fosler C."/>
            <person name="Gabrielian A.E."/>
            <person name="Garg N.S."/>
            <person name="Gelbart W.M."/>
            <person name="Glasser K."/>
            <person name="Glodek A."/>
            <person name="Gong F."/>
            <person name="Gorrell J.H."/>
            <person name="Gu Z."/>
            <person name="Guan P."/>
            <person name="Harris M."/>
            <person name="Harris N.L."/>
            <person name="Harvey D.A."/>
            <person name="Heiman T.J."/>
            <person name="Hernandez J.R."/>
            <person name="Houck J."/>
            <person name="Hostin D."/>
            <person name="Houston K.A."/>
            <person name="Howland T.J."/>
            <person name="Wei M.-H."/>
            <person name="Ibegwam C."/>
            <person name="Jalali M."/>
            <person name="Kalush F."/>
            <person name="Karpen G.H."/>
            <person name="Ke Z."/>
            <person name="Kennison J.A."/>
            <person name="Ketchum K.A."/>
            <person name="Kimmel B.E."/>
            <person name="Kodira C.D."/>
            <person name="Kraft C.L."/>
            <person name="Kravitz S."/>
            <person name="Kulp D."/>
            <person name="Lai Z."/>
            <person name="Lasko P."/>
            <person name="Lei Y."/>
            <person name="Levitsky A.A."/>
            <person name="Li J.H."/>
            <person name="Li Z."/>
            <person name="Liang Y."/>
            <person name="Lin X."/>
            <person name="Liu X."/>
            <person name="Mattei B."/>
            <person name="McIntosh T.C."/>
            <person name="McLeod M.P."/>
            <person name="McPherson D."/>
            <person name="Merkulov G."/>
            <person name="Milshina N.V."/>
            <person name="Mobarry C."/>
            <person name="Morris J."/>
            <person name="Moshrefi A."/>
            <person name="Mount S.M."/>
            <person name="Moy M."/>
            <person name="Murphy B."/>
            <person name="Murphy L."/>
            <person name="Muzny D.M."/>
            <person name="Nelson D.L."/>
            <person name="Nelson D.R."/>
            <person name="Nelson K.A."/>
            <person name="Nixon K."/>
            <person name="Nusskern D.R."/>
            <person name="Pacleb J.M."/>
            <person name="Palazzolo M."/>
            <person name="Pittman G.S."/>
            <person name="Pan S."/>
            <person name="Pollard J."/>
            <person name="Puri V."/>
            <person name="Reese M.G."/>
            <person name="Reinert K."/>
            <person name="Remington K."/>
            <person name="Saunders R.D.C."/>
            <person name="Scheeler F."/>
            <person name="Shen H."/>
            <person name="Shue B.C."/>
            <person name="Siden-Kiamos I."/>
            <person name="Simpson M."/>
            <person name="Skupski M.P."/>
            <person name="Smith T.J."/>
            <person name="Spier E."/>
            <person name="Spradling A.C."/>
            <person name="Stapleton M."/>
            <person name="Strong R."/>
            <person name="Sun E."/>
            <person name="Svirskas R."/>
            <person name="Tector C."/>
            <person name="Turner R."/>
            <person name="Venter E."/>
            <person name="Wang A.H."/>
            <person name="Wang X."/>
            <person name="Wang Z.-Y."/>
            <person name="Wassarman D.A."/>
            <person name="Weinstock G.M."/>
            <person name="Weissenbach J."/>
            <person name="Williams S.M."/>
            <person name="Woodage T."/>
            <person name="Worley K.C."/>
            <person name="Wu D."/>
            <person name="Yang S."/>
            <person name="Yao Q.A."/>
            <person name="Ye J."/>
            <person name="Yeh R.-F."/>
            <person name="Zaveri J.S."/>
            <person name="Zhan M."/>
            <person name="Zhang G."/>
            <person name="Zhao Q."/>
            <person name="Zheng L."/>
            <person name="Zheng X.H."/>
            <person name="Zhong F.N."/>
            <person name="Zhong W."/>
            <person name="Zhou X."/>
            <person name="Zhu S.C."/>
            <person name="Zhu X."/>
            <person name="Smith H.O."/>
            <person name="Gibbs R.A."/>
            <person name="Myers E.W."/>
            <person name="Rubin G.M."/>
            <person name="Venter J.C."/>
        </authorList>
    </citation>
    <scope>NUCLEOTIDE SEQUENCE [LARGE SCALE GENOMIC DNA]</scope>
    <source>
        <strain>Berkeley</strain>
    </source>
</reference>
<reference key="4">
    <citation type="journal article" date="2002" name="Genome Biol.">
        <title>Annotation of the Drosophila melanogaster euchromatic genome: a systematic review.</title>
        <authorList>
            <person name="Misra S."/>
            <person name="Crosby M.A."/>
            <person name="Mungall C.J."/>
            <person name="Matthews B.B."/>
            <person name="Campbell K.S."/>
            <person name="Hradecky P."/>
            <person name="Huang Y."/>
            <person name="Kaminker J.S."/>
            <person name="Millburn G.H."/>
            <person name="Prochnik S.E."/>
            <person name="Smith C.D."/>
            <person name="Tupy J.L."/>
            <person name="Whitfield E.J."/>
            <person name="Bayraktaroglu L."/>
            <person name="Berman B.P."/>
            <person name="Bettencourt B.R."/>
            <person name="Celniker S.E."/>
            <person name="de Grey A.D.N.J."/>
            <person name="Drysdale R.A."/>
            <person name="Harris N.L."/>
            <person name="Richter J."/>
            <person name="Russo S."/>
            <person name="Schroeder A.J."/>
            <person name="Shu S.Q."/>
            <person name="Stapleton M."/>
            <person name="Yamada C."/>
            <person name="Ashburner M."/>
            <person name="Gelbart W.M."/>
            <person name="Rubin G.M."/>
            <person name="Lewis S.E."/>
        </authorList>
    </citation>
    <scope>GENOME REANNOTATION</scope>
    <source>
        <strain>Berkeley</strain>
    </source>
</reference>
<reference key="5">
    <citation type="submission" date="2005-06" db="EMBL/GenBank/DDBJ databases">
        <authorList>
            <person name="Stapleton M."/>
            <person name="Carlson J.W."/>
            <person name="Chavez C."/>
            <person name="Frise E."/>
            <person name="George R.A."/>
            <person name="Pacleb J.M."/>
            <person name="Park S."/>
            <person name="Wan K.H."/>
            <person name="Yu C."/>
            <person name="Celniker S.E."/>
        </authorList>
    </citation>
    <scope>NUCLEOTIDE SEQUENCE [LARGE SCALE MRNA]</scope>
    <source>
        <strain>Berkeley</strain>
        <tissue>Embryo</tissue>
    </source>
</reference>
<evidence type="ECO:0000250" key="1"/>
<evidence type="ECO:0000255" key="2"/>
<evidence type="ECO:0000305" key="3"/>
<comment type="pathway">
    <text>Protein modification; protein glycosylation.</text>
</comment>
<comment type="subcellular location">
    <subcellularLocation>
        <location evidence="1">Golgi apparatus</location>
        <location evidence="1">Golgi stack membrane</location>
        <topology evidence="1">Single-pass type II membrane protein</topology>
    </subcellularLocation>
    <text evidence="1">Membrane-bound form in trans cisternae of Golgi.</text>
</comment>
<comment type="similarity">
    <text evidence="3">Belongs to the glycosyltransferase 10 family.</text>
</comment>
<proteinExistence type="evidence at transcript level"/>
<organism>
    <name type="scientific">Drosophila melanogaster</name>
    <name type="common">Fruit fly</name>
    <dbReference type="NCBI Taxonomy" id="7227"/>
    <lineage>
        <taxon>Eukaryota</taxon>
        <taxon>Metazoa</taxon>
        <taxon>Ecdysozoa</taxon>
        <taxon>Arthropoda</taxon>
        <taxon>Hexapoda</taxon>
        <taxon>Insecta</taxon>
        <taxon>Pterygota</taxon>
        <taxon>Neoptera</taxon>
        <taxon>Endopterygota</taxon>
        <taxon>Diptera</taxon>
        <taxon>Brachycera</taxon>
        <taxon>Muscomorpha</taxon>
        <taxon>Ephydroidea</taxon>
        <taxon>Drosophilidae</taxon>
        <taxon>Drosophila</taxon>
        <taxon>Sophophora</taxon>
    </lineage>
</organism>
<gene>
    <name type="primary">FucTB</name>
    <name type="ORF">CG4435</name>
</gene>
<accession>Q9VLC1</accession>
<accession>Q4QQB0</accession>
<accession>Q8I928</accession>
<protein>
    <recommendedName>
        <fullName>Alpha-(1,3)-fucosyltransferase B</fullName>
        <ecNumber>2.4.1.-</ecNumber>
    </recommendedName>
    <alternativeName>
        <fullName>Galactoside 3-L-fucosyltransferase</fullName>
    </alternativeName>
</protein>
<name>FUCTB_DROME</name>
<keyword id="KW-0325">Glycoprotein</keyword>
<keyword id="KW-0328">Glycosyltransferase</keyword>
<keyword id="KW-0333">Golgi apparatus</keyword>
<keyword id="KW-0472">Membrane</keyword>
<keyword id="KW-1185">Reference proteome</keyword>
<keyword id="KW-0735">Signal-anchor</keyword>
<keyword id="KW-0808">Transferase</keyword>
<keyword id="KW-0812">Transmembrane</keyword>
<keyword id="KW-1133">Transmembrane helix</keyword>
<dbReference type="EC" id="2.4.1.-"/>
<dbReference type="EMBL" id="AJ302046">
    <property type="protein sequence ID" value="CAC41642.1"/>
    <property type="molecule type" value="mRNA"/>
</dbReference>
<dbReference type="EMBL" id="AY061932">
    <property type="protein sequence ID" value="AAL31643.1"/>
    <property type="molecule type" value="mRNA"/>
</dbReference>
<dbReference type="EMBL" id="AE014134">
    <property type="protein sequence ID" value="AAF52773.4"/>
    <property type="molecule type" value="Genomic_DNA"/>
</dbReference>
<dbReference type="EMBL" id="BT023506">
    <property type="protein sequence ID" value="AAY84906.1"/>
    <property type="molecule type" value="mRNA"/>
</dbReference>
<dbReference type="RefSeq" id="NP_001285779.1">
    <property type="nucleotide sequence ID" value="NM_001298850.1"/>
</dbReference>
<dbReference type="RefSeq" id="NP_609288.4">
    <property type="nucleotide sequence ID" value="NM_135444.5"/>
</dbReference>
<dbReference type="SMR" id="Q9VLC1"/>
<dbReference type="BioGRID" id="60364">
    <property type="interactions" value="1"/>
</dbReference>
<dbReference type="FunCoup" id="Q9VLC1">
    <property type="interactions" value="569"/>
</dbReference>
<dbReference type="IntAct" id="Q9VLC1">
    <property type="interactions" value="2"/>
</dbReference>
<dbReference type="STRING" id="7227.FBpp0312203"/>
<dbReference type="CAZy" id="GT10">
    <property type="family name" value="Glycosyltransferase Family 10"/>
</dbReference>
<dbReference type="GlyCosmos" id="Q9VLC1">
    <property type="glycosylation" value="3 sites, No reported glycans"/>
</dbReference>
<dbReference type="GlyGen" id="Q9VLC1">
    <property type="glycosylation" value="3 sites"/>
</dbReference>
<dbReference type="PaxDb" id="7227-FBpp0079411"/>
<dbReference type="DNASU" id="34260"/>
<dbReference type="EnsemblMetazoa" id="FBtr0079811">
    <property type="protein sequence ID" value="FBpp0079411"/>
    <property type="gene ID" value="FBgn0032117"/>
</dbReference>
<dbReference type="EnsemblMetazoa" id="FBtr0346623">
    <property type="protein sequence ID" value="FBpp0312203"/>
    <property type="gene ID" value="FBgn0032117"/>
</dbReference>
<dbReference type="GeneID" id="34260"/>
<dbReference type="KEGG" id="dme:Dmel_CG4435"/>
<dbReference type="UCSC" id="CG4435-RA">
    <property type="organism name" value="d. melanogaster"/>
</dbReference>
<dbReference type="AGR" id="FB:FBgn0032117"/>
<dbReference type="CTD" id="34260"/>
<dbReference type="FlyBase" id="FBgn0032117">
    <property type="gene designation" value="FucTB"/>
</dbReference>
<dbReference type="VEuPathDB" id="VectorBase:FBgn0032117"/>
<dbReference type="eggNOG" id="KOG2619">
    <property type="taxonomic scope" value="Eukaryota"/>
</dbReference>
<dbReference type="HOGENOM" id="CLU_032075_0_2_1"/>
<dbReference type="InParanoid" id="Q9VLC1"/>
<dbReference type="OMA" id="HYMKELM"/>
<dbReference type="OrthoDB" id="9993460at2759"/>
<dbReference type="PhylomeDB" id="Q9VLC1"/>
<dbReference type="Reactome" id="R-DME-9037629">
    <property type="pathway name" value="Lewis blood group biosynthesis"/>
</dbReference>
<dbReference type="UniPathway" id="UPA00378"/>
<dbReference type="BioGRID-ORCS" id="34260">
    <property type="hits" value="0 hits in 3 CRISPR screens"/>
</dbReference>
<dbReference type="GenomeRNAi" id="34260"/>
<dbReference type="PRO" id="PR:Q9VLC1"/>
<dbReference type="Proteomes" id="UP000000803">
    <property type="component" value="Chromosome 2L"/>
</dbReference>
<dbReference type="Bgee" id="FBgn0032117">
    <property type="expression patterns" value="Expressed in early elongation stage spermatid (Drosophila) in testis and 62 other cell types or tissues"/>
</dbReference>
<dbReference type="ExpressionAtlas" id="Q9VLC1">
    <property type="expression patterns" value="baseline and differential"/>
</dbReference>
<dbReference type="GO" id="GO:0032580">
    <property type="term" value="C:Golgi cisterna membrane"/>
    <property type="evidence" value="ECO:0007669"/>
    <property type="project" value="UniProtKB-SubCell"/>
</dbReference>
<dbReference type="GO" id="GO:0000139">
    <property type="term" value="C:Golgi membrane"/>
    <property type="evidence" value="ECO:0007669"/>
    <property type="project" value="InterPro"/>
</dbReference>
<dbReference type="GO" id="GO:0046920">
    <property type="term" value="F:alpha-(1-&gt;3)-fucosyltransferase activity"/>
    <property type="evidence" value="ECO:0000318"/>
    <property type="project" value="GO_Central"/>
</dbReference>
<dbReference type="GO" id="GO:0036065">
    <property type="term" value="P:fucosylation"/>
    <property type="evidence" value="ECO:0000318"/>
    <property type="project" value="GO_Central"/>
</dbReference>
<dbReference type="GO" id="GO:0006486">
    <property type="term" value="P:protein glycosylation"/>
    <property type="evidence" value="ECO:0007669"/>
    <property type="project" value="UniProtKB-UniPathway"/>
</dbReference>
<dbReference type="FunFam" id="3.40.50.11660:FF:000002">
    <property type="entry name" value="Alpha-(1,3)-fucosyltransferase"/>
    <property type="match status" value="1"/>
</dbReference>
<dbReference type="Gene3D" id="3.40.50.11660">
    <property type="entry name" value="Glycosyl transferase family 10, C-terminal domain"/>
    <property type="match status" value="1"/>
</dbReference>
<dbReference type="InterPro" id="IPR017176">
    <property type="entry name" value="Alpha-1_3-FUT_met"/>
</dbReference>
<dbReference type="InterPro" id="IPR055270">
    <property type="entry name" value="Glyco_tran_10_C"/>
</dbReference>
<dbReference type="InterPro" id="IPR031481">
    <property type="entry name" value="Glyco_tran_10_N"/>
</dbReference>
<dbReference type="InterPro" id="IPR001503">
    <property type="entry name" value="Glyco_trans_10"/>
</dbReference>
<dbReference type="InterPro" id="IPR038577">
    <property type="entry name" value="GT10-like_C_sf"/>
</dbReference>
<dbReference type="PANTHER" id="PTHR11929">
    <property type="entry name" value="ALPHA- 1,3 -FUCOSYLTRANSFERASE"/>
    <property type="match status" value="1"/>
</dbReference>
<dbReference type="PANTHER" id="PTHR11929:SF194">
    <property type="entry name" value="ALPHA-(1,3)-FUCOSYLTRANSFERASE 10"/>
    <property type="match status" value="1"/>
</dbReference>
<dbReference type="Pfam" id="PF17039">
    <property type="entry name" value="Glyco_tran_10_N"/>
    <property type="match status" value="1"/>
</dbReference>
<dbReference type="Pfam" id="PF00852">
    <property type="entry name" value="Glyco_transf_10"/>
    <property type="match status" value="1"/>
</dbReference>
<dbReference type="PIRSF" id="PIRSF037332">
    <property type="entry name" value="Alpha1_3FUT_met"/>
    <property type="match status" value="1"/>
</dbReference>
<dbReference type="SUPFAM" id="SSF53756">
    <property type="entry name" value="UDP-Glycosyltransferase/glycogen phosphorylase"/>
    <property type="match status" value="1"/>
</dbReference>